<reference key="1">
    <citation type="journal article" date="1997" name="J. Bacteriol.">
        <title>The Bacillus subtilis ureABC operon.</title>
        <authorList>
            <person name="Cruz-Ramos H."/>
            <person name="Glaser P."/>
            <person name="Wray L.V. Jr."/>
            <person name="Fisher S.H."/>
        </authorList>
    </citation>
    <scope>NUCLEOTIDE SEQUENCE [GENOMIC DNA]</scope>
    <source>
        <strain>168</strain>
    </source>
</reference>
<reference key="2">
    <citation type="journal article" date="1997" name="Nature">
        <title>The complete genome sequence of the Gram-positive bacterium Bacillus subtilis.</title>
        <authorList>
            <person name="Kunst F."/>
            <person name="Ogasawara N."/>
            <person name="Moszer I."/>
            <person name="Albertini A.M."/>
            <person name="Alloni G."/>
            <person name="Azevedo V."/>
            <person name="Bertero M.G."/>
            <person name="Bessieres P."/>
            <person name="Bolotin A."/>
            <person name="Borchert S."/>
            <person name="Borriss R."/>
            <person name="Boursier L."/>
            <person name="Brans A."/>
            <person name="Braun M."/>
            <person name="Brignell S.C."/>
            <person name="Bron S."/>
            <person name="Brouillet S."/>
            <person name="Bruschi C.V."/>
            <person name="Caldwell B."/>
            <person name="Capuano V."/>
            <person name="Carter N.M."/>
            <person name="Choi S.-K."/>
            <person name="Codani J.-J."/>
            <person name="Connerton I.F."/>
            <person name="Cummings N.J."/>
            <person name="Daniel R.A."/>
            <person name="Denizot F."/>
            <person name="Devine K.M."/>
            <person name="Duesterhoeft A."/>
            <person name="Ehrlich S.D."/>
            <person name="Emmerson P.T."/>
            <person name="Entian K.-D."/>
            <person name="Errington J."/>
            <person name="Fabret C."/>
            <person name="Ferrari E."/>
            <person name="Foulger D."/>
            <person name="Fritz C."/>
            <person name="Fujita M."/>
            <person name="Fujita Y."/>
            <person name="Fuma S."/>
            <person name="Galizzi A."/>
            <person name="Galleron N."/>
            <person name="Ghim S.-Y."/>
            <person name="Glaser P."/>
            <person name="Goffeau A."/>
            <person name="Golightly E.J."/>
            <person name="Grandi G."/>
            <person name="Guiseppi G."/>
            <person name="Guy B.J."/>
            <person name="Haga K."/>
            <person name="Haiech J."/>
            <person name="Harwood C.R."/>
            <person name="Henaut A."/>
            <person name="Hilbert H."/>
            <person name="Holsappel S."/>
            <person name="Hosono S."/>
            <person name="Hullo M.-F."/>
            <person name="Itaya M."/>
            <person name="Jones L.-M."/>
            <person name="Joris B."/>
            <person name="Karamata D."/>
            <person name="Kasahara Y."/>
            <person name="Klaerr-Blanchard M."/>
            <person name="Klein C."/>
            <person name="Kobayashi Y."/>
            <person name="Koetter P."/>
            <person name="Koningstein G."/>
            <person name="Krogh S."/>
            <person name="Kumano M."/>
            <person name="Kurita K."/>
            <person name="Lapidus A."/>
            <person name="Lardinois S."/>
            <person name="Lauber J."/>
            <person name="Lazarevic V."/>
            <person name="Lee S.-M."/>
            <person name="Levine A."/>
            <person name="Liu H."/>
            <person name="Masuda S."/>
            <person name="Mauel C."/>
            <person name="Medigue C."/>
            <person name="Medina N."/>
            <person name="Mellado R.P."/>
            <person name="Mizuno M."/>
            <person name="Moestl D."/>
            <person name="Nakai S."/>
            <person name="Noback M."/>
            <person name="Noone D."/>
            <person name="O'Reilly M."/>
            <person name="Ogawa K."/>
            <person name="Ogiwara A."/>
            <person name="Oudega B."/>
            <person name="Park S.-H."/>
            <person name="Parro V."/>
            <person name="Pohl T.M."/>
            <person name="Portetelle D."/>
            <person name="Porwollik S."/>
            <person name="Prescott A.M."/>
            <person name="Presecan E."/>
            <person name="Pujic P."/>
            <person name="Purnelle B."/>
            <person name="Rapoport G."/>
            <person name="Rey M."/>
            <person name="Reynolds S."/>
            <person name="Rieger M."/>
            <person name="Rivolta C."/>
            <person name="Rocha E."/>
            <person name="Roche B."/>
            <person name="Rose M."/>
            <person name="Sadaie Y."/>
            <person name="Sato T."/>
            <person name="Scanlan E."/>
            <person name="Schleich S."/>
            <person name="Schroeter R."/>
            <person name="Scoffone F."/>
            <person name="Sekiguchi J."/>
            <person name="Sekowska A."/>
            <person name="Seror S.J."/>
            <person name="Serror P."/>
            <person name="Shin B.-S."/>
            <person name="Soldo B."/>
            <person name="Sorokin A."/>
            <person name="Tacconi E."/>
            <person name="Takagi T."/>
            <person name="Takahashi H."/>
            <person name="Takemaru K."/>
            <person name="Takeuchi M."/>
            <person name="Tamakoshi A."/>
            <person name="Tanaka T."/>
            <person name="Terpstra P."/>
            <person name="Tognoni A."/>
            <person name="Tosato V."/>
            <person name="Uchiyama S."/>
            <person name="Vandenbol M."/>
            <person name="Vannier F."/>
            <person name="Vassarotti A."/>
            <person name="Viari A."/>
            <person name="Wambutt R."/>
            <person name="Wedler E."/>
            <person name="Wedler H."/>
            <person name="Weitzenegger T."/>
            <person name="Winters P."/>
            <person name="Wipat A."/>
            <person name="Yamamoto H."/>
            <person name="Yamane K."/>
            <person name="Yasumoto K."/>
            <person name="Yata K."/>
            <person name="Yoshida K."/>
            <person name="Yoshikawa H.-F."/>
            <person name="Zumstein E."/>
            <person name="Yoshikawa H."/>
            <person name="Danchin A."/>
        </authorList>
    </citation>
    <scope>NUCLEOTIDE SEQUENCE [LARGE SCALE GENOMIC DNA]</scope>
    <source>
        <strain>168</strain>
    </source>
</reference>
<reference key="3">
    <citation type="journal article" date="2006" name="J. Mol. Biol.">
        <title>The forespore line of gene expression in Bacillus subtilis.</title>
        <authorList>
            <person name="Wang S.T."/>
            <person name="Setlow B."/>
            <person name="Conlon E.M."/>
            <person name="Lyon J.L."/>
            <person name="Imamura D."/>
            <person name="Sato T."/>
            <person name="Setlow P."/>
            <person name="Losick R."/>
            <person name="Eichenberger P."/>
        </authorList>
    </citation>
    <scope>DEVELOPMENTAL STAGE</scope>
    <scope>INDUCTION</scope>
    <scope>POSSIBLE FUNCTION</scope>
</reference>
<protein>
    <recommendedName>
        <fullName>Uncharacterized membrane protein YwnJ</fullName>
    </recommendedName>
</protein>
<proteinExistence type="evidence at transcript level"/>
<sequence>MNRLLLAGWIFFILLSVCTESFSGMVVSQTVAFHFQPHPDLSQFLVMDFTELTVPEAFIQKIGHAFSFFVLTYLLWKQRGSIRSAAAGSFAFAFFTEVLQLFFSRNGCIRDVLIDAVGIGLFYGLYVLAKRRKQEMYEKY</sequence>
<gene>
    <name type="primary">ywnJ</name>
    <name type="ordered locus">BSU36540</name>
</gene>
<keyword id="KW-1003">Cell membrane</keyword>
<keyword id="KW-0472">Membrane</keyword>
<keyword id="KW-1185">Reference proteome</keyword>
<keyword id="KW-0812">Transmembrane</keyword>
<keyword id="KW-1133">Transmembrane helix</keyword>
<name>YWNJ_BACSU</name>
<dbReference type="EMBL" id="Y08559">
    <property type="protein sequence ID" value="CAA69856.1"/>
    <property type="molecule type" value="Genomic_DNA"/>
</dbReference>
<dbReference type="EMBL" id="AL009126">
    <property type="protein sequence ID" value="CAB15671.1"/>
    <property type="molecule type" value="Genomic_DNA"/>
</dbReference>
<dbReference type="PIR" id="C70064">
    <property type="entry name" value="C70064"/>
</dbReference>
<dbReference type="RefSeq" id="NP_391535.1">
    <property type="nucleotide sequence ID" value="NC_000964.3"/>
</dbReference>
<dbReference type="RefSeq" id="WP_003227753.1">
    <property type="nucleotide sequence ID" value="NZ_OZ025638.1"/>
</dbReference>
<dbReference type="FunCoup" id="P71045">
    <property type="interactions" value="10"/>
</dbReference>
<dbReference type="PaxDb" id="224308-BSU36540"/>
<dbReference type="DNASU" id="936936"/>
<dbReference type="EnsemblBacteria" id="CAB15671">
    <property type="protein sequence ID" value="CAB15671"/>
    <property type="gene ID" value="BSU_36540"/>
</dbReference>
<dbReference type="GeneID" id="936936"/>
<dbReference type="KEGG" id="bsu:BSU36540"/>
<dbReference type="PATRIC" id="fig|224308.179.peg.3954"/>
<dbReference type="eggNOG" id="ENOG503303W">
    <property type="taxonomic scope" value="Bacteria"/>
</dbReference>
<dbReference type="InParanoid" id="P71045"/>
<dbReference type="OrthoDB" id="2659829at2"/>
<dbReference type="BioCyc" id="BSUB:BSU36540-MONOMER"/>
<dbReference type="Proteomes" id="UP000001570">
    <property type="component" value="Chromosome"/>
</dbReference>
<dbReference type="GO" id="GO:0005886">
    <property type="term" value="C:plasma membrane"/>
    <property type="evidence" value="ECO:0007669"/>
    <property type="project" value="UniProtKB-SubCell"/>
</dbReference>
<dbReference type="InterPro" id="IPR006976">
    <property type="entry name" value="VanZ-like"/>
</dbReference>
<dbReference type="NCBIfam" id="NF037970">
    <property type="entry name" value="vanZ_1"/>
    <property type="match status" value="1"/>
</dbReference>
<dbReference type="Pfam" id="PF04892">
    <property type="entry name" value="VanZ"/>
    <property type="match status" value="1"/>
</dbReference>
<comment type="function">
    <text>May be important for peptidoglycan remodeling.</text>
</comment>
<comment type="subcellular location">
    <subcellularLocation>
        <location evidence="3">Cell membrane</location>
        <topology evidence="3">Multi-pass membrane protein</topology>
    </subcellularLocation>
</comment>
<comment type="developmental stage">
    <text evidence="2">Expressed during sporulation.</text>
</comment>
<comment type="induction">
    <text evidence="2">Expression is sigma F-dependent.</text>
</comment>
<feature type="chain" id="PRO_0000360546" description="Uncharacterized membrane protein YwnJ">
    <location>
        <begin position="1"/>
        <end position="140"/>
    </location>
</feature>
<feature type="transmembrane region" description="Helical" evidence="1">
    <location>
        <begin position="4"/>
        <end position="24"/>
    </location>
</feature>
<feature type="transmembrane region" description="Helical" evidence="1">
    <location>
        <begin position="56"/>
        <end position="76"/>
    </location>
</feature>
<feature type="transmembrane region" description="Helical" evidence="1">
    <location>
        <begin position="84"/>
        <end position="104"/>
    </location>
</feature>
<feature type="transmembrane region" description="Helical" evidence="1">
    <location>
        <begin position="109"/>
        <end position="129"/>
    </location>
</feature>
<accession>P71045</accession>
<accession>Q795A2</accession>
<evidence type="ECO:0000255" key="1"/>
<evidence type="ECO:0000269" key="2">
    <source>
    </source>
</evidence>
<evidence type="ECO:0000305" key="3"/>
<organism>
    <name type="scientific">Bacillus subtilis (strain 168)</name>
    <dbReference type="NCBI Taxonomy" id="224308"/>
    <lineage>
        <taxon>Bacteria</taxon>
        <taxon>Bacillati</taxon>
        <taxon>Bacillota</taxon>
        <taxon>Bacilli</taxon>
        <taxon>Bacillales</taxon>
        <taxon>Bacillaceae</taxon>
        <taxon>Bacillus</taxon>
    </lineage>
</organism>